<sequence>MSSLIKSINLDKINHSQSTVKDYILLMKPRVMSLVIFTCFVGMLLAPYSVHPFIASIAVVCIAFGAGSAGAINMWYDRDIDSLMKRTQKRPIVRGAIEPDEALSFGLITGFFAVFFMALCVNLLASFLLLFTIFYYICIYTIWLKRRSIQNIVIGGVSGALPPVIGYAAVSNTISLQSVILFLIILIWTPPHSWALALFCNEDYKNCKVPMMPTIKGALYAKKQILIYSFLLFIVSLMPFFIGMSNFIYLIISGILGLVFLYYAGSLFYDTPDNKQAKRLFVYSIFYLFFIFLLLYLTNTILSISER</sequence>
<protein>
    <recommendedName>
        <fullName evidence="1">Protoheme IX farnesyltransferase</fullName>
        <ecNumber evidence="1">2.5.1.141</ecNumber>
    </recommendedName>
    <alternativeName>
        <fullName evidence="1">Heme B farnesyltransferase</fullName>
    </alternativeName>
    <alternativeName>
        <fullName evidence="1">Heme O synthase</fullName>
    </alternativeName>
</protein>
<evidence type="ECO:0000255" key="1">
    <source>
        <dbReference type="HAMAP-Rule" id="MF_00154"/>
    </source>
</evidence>
<proteinExistence type="inferred from homology"/>
<feature type="chain" id="PRO_0000327144" description="Protoheme IX farnesyltransferase">
    <location>
        <begin position="1"/>
        <end position="307"/>
    </location>
</feature>
<feature type="transmembrane region" description="Helical" evidence="1">
    <location>
        <begin position="31"/>
        <end position="51"/>
    </location>
</feature>
<feature type="transmembrane region" description="Helical" evidence="1">
    <location>
        <begin position="52"/>
        <end position="72"/>
    </location>
</feature>
<feature type="transmembrane region" description="Helical" evidence="1">
    <location>
        <begin position="102"/>
        <end position="119"/>
    </location>
</feature>
<feature type="transmembrane region" description="Helical" evidence="1">
    <location>
        <begin position="123"/>
        <end position="145"/>
    </location>
</feature>
<feature type="transmembrane region" description="Helical" evidence="1">
    <location>
        <begin position="151"/>
        <end position="171"/>
    </location>
</feature>
<feature type="transmembrane region" description="Helical" evidence="1">
    <location>
        <begin position="179"/>
        <end position="199"/>
    </location>
</feature>
<feature type="transmembrane region" description="Helical" evidence="1">
    <location>
        <begin position="225"/>
        <end position="245"/>
    </location>
</feature>
<feature type="transmembrane region" description="Helical" evidence="1">
    <location>
        <begin position="247"/>
        <end position="267"/>
    </location>
</feature>
<feature type="transmembrane region" description="Helical" evidence="1">
    <location>
        <begin position="281"/>
        <end position="301"/>
    </location>
</feature>
<keyword id="KW-0997">Cell inner membrane</keyword>
<keyword id="KW-1003">Cell membrane</keyword>
<keyword id="KW-0350">Heme biosynthesis</keyword>
<keyword id="KW-0472">Membrane</keyword>
<keyword id="KW-0808">Transferase</keyword>
<keyword id="KW-0812">Transmembrane</keyword>
<keyword id="KW-1133">Transmembrane helix</keyword>
<dbReference type="EC" id="2.5.1.141" evidence="1"/>
<dbReference type="EMBL" id="CP000409">
    <property type="protein sequence ID" value="ABV73680.1"/>
    <property type="molecule type" value="Genomic_DNA"/>
</dbReference>
<dbReference type="RefSeq" id="WP_012148875.1">
    <property type="nucleotide sequence ID" value="NC_009879.1"/>
</dbReference>
<dbReference type="SMR" id="A8EZ97"/>
<dbReference type="STRING" id="293613.A1E_03755"/>
<dbReference type="KEGG" id="rcm:A1E_03755"/>
<dbReference type="eggNOG" id="COG0109">
    <property type="taxonomic scope" value="Bacteria"/>
</dbReference>
<dbReference type="HOGENOM" id="CLU_029631_0_2_5"/>
<dbReference type="UniPathway" id="UPA00834">
    <property type="reaction ID" value="UER00712"/>
</dbReference>
<dbReference type="Proteomes" id="UP000007056">
    <property type="component" value="Chromosome"/>
</dbReference>
<dbReference type="GO" id="GO:0005886">
    <property type="term" value="C:plasma membrane"/>
    <property type="evidence" value="ECO:0007669"/>
    <property type="project" value="UniProtKB-SubCell"/>
</dbReference>
<dbReference type="GO" id="GO:0008495">
    <property type="term" value="F:protoheme IX farnesyltransferase activity"/>
    <property type="evidence" value="ECO:0007669"/>
    <property type="project" value="UniProtKB-UniRule"/>
</dbReference>
<dbReference type="GO" id="GO:0048034">
    <property type="term" value="P:heme O biosynthetic process"/>
    <property type="evidence" value="ECO:0007669"/>
    <property type="project" value="UniProtKB-UniRule"/>
</dbReference>
<dbReference type="CDD" id="cd13957">
    <property type="entry name" value="PT_UbiA_Cox10"/>
    <property type="match status" value="1"/>
</dbReference>
<dbReference type="Gene3D" id="1.10.357.140">
    <property type="entry name" value="UbiA prenyltransferase"/>
    <property type="match status" value="1"/>
</dbReference>
<dbReference type="HAMAP" id="MF_00154">
    <property type="entry name" value="CyoE_CtaB"/>
    <property type="match status" value="1"/>
</dbReference>
<dbReference type="InterPro" id="IPR006369">
    <property type="entry name" value="Protohaem_IX_farnesylTrfase"/>
</dbReference>
<dbReference type="InterPro" id="IPR000537">
    <property type="entry name" value="UbiA_prenyltransferase"/>
</dbReference>
<dbReference type="InterPro" id="IPR030470">
    <property type="entry name" value="UbiA_prenylTrfase_CS"/>
</dbReference>
<dbReference type="InterPro" id="IPR044878">
    <property type="entry name" value="UbiA_sf"/>
</dbReference>
<dbReference type="NCBIfam" id="TIGR01473">
    <property type="entry name" value="cyoE_ctaB"/>
    <property type="match status" value="1"/>
</dbReference>
<dbReference type="NCBIfam" id="NF003349">
    <property type="entry name" value="PRK04375.1-2"/>
    <property type="match status" value="1"/>
</dbReference>
<dbReference type="PANTHER" id="PTHR43448:SF7">
    <property type="entry name" value="4-HYDROXYBENZOATE SOLANESYLTRANSFERASE"/>
    <property type="match status" value="1"/>
</dbReference>
<dbReference type="PANTHER" id="PTHR43448">
    <property type="entry name" value="PROTOHEME IX FARNESYLTRANSFERASE, MITOCHONDRIAL"/>
    <property type="match status" value="1"/>
</dbReference>
<dbReference type="Pfam" id="PF01040">
    <property type="entry name" value="UbiA"/>
    <property type="match status" value="1"/>
</dbReference>
<dbReference type="PROSITE" id="PS00943">
    <property type="entry name" value="UBIA"/>
    <property type="match status" value="1"/>
</dbReference>
<name>COXX_RICCK</name>
<accession>A8EZ97</accession>
<reference key="1">
    <citation type="submission" date="2007-09" db="EMBL/GenBank/DDBJ databases">
        <title>Complete genome sequence of Rickettsia canadensis.</title>
        <authorList>
            <person name="Madan A."/>
            <person name="Fahey J."/>
            <person name="Helton E."/>
            <person name="Ketteman M."/>
            <person name="Madan A."/>
            <person name="Rodrigues S."/>
            <person name="Sanchez A."/>
            <person name="Whiting M."/>
            <person name="Dasch G."/>
            <person name="Eremeeva M."/>
        </authorList>
    </citation>
    <scope>NUCLEOTIDE SEQUENCE [LARGE SCALE GENOMIC DNA]</scope>
    <source>
        <strain>McKiel</strain>
    </source>
</reference>
<gene>
    <name evidence="1" type="primary">ctaB</name>
    <name type="ordered locus">A1E_03755</name>
</gene>
<comment type="function">
    <text evidence="1">Converts heme B (protoheme IX) to heme O by substitution of the vinyl group on carbon 2 of heme B porphyrin ring with a hydroxyethyl farnesyl side group.</text>
</comment>
<comment type="catalytic activity">
    <reaction evidence="1">
        <text>heme b + (2E,6E)-farnesyl diphosphate + H2O = Fe(II)-heme o + diphosphate</text>
        <dbReference type="Rhea" id="RHEA:28070"/>
        <dbReference type="ChEBI" id="CHEBI:15377"/>
        <dbReference type="ChEBI" id="CHEBI:33019"/>
        <dbReference type="ChEBI" id="CHEBI:60344"/>
        <dbReference type="ChEBI" id="CHEBI:60530"/>
        <dbReference type="ChEBI" id="CHEBI:175763"/>
        <dbReference type="EC" id="2.5.1.141"/>
    </reaction>
</comment>
<comment type="pathway">
    <text evidence="1">Porphyrin-containing compound metabolism; heme O biosynthesis; heme O from protoheme: step 1/1.</text>
</comment>
<comment type="subcellular location">
    <subcellularLocation>
        <location evidence="1">Cell inner membrane</location>
        <topology evidence="1">Multi-pass membrane protein</topology>
    </subcellularLocation>
</comment>
<comment type="miscellaneous">
    <text evidence="1">Carbon 2 of the heme B porphyrin ring is defined according to the Fischer nomenclature.</text>
</comment>
<comment type="similarity">
    <text evidence="1">Belongs to the UbiA prenyltransferase family. Protoheme IX farnesyltransferase subfamily.</text>
</comment>
<organism>
    <name type="scientific">Rickettsia canadensis (strain McKiel)</name>
    <dbReference type="NCBI Taxonomy" id="293613"/>
    <lineage>
        <taxon>Bacteria</taxon>
        <taxon>Pseudomonadati</taxon>
        <taxon>Pseudomonadota</taxon>
        <taxon>Alphaproteobacteria</taxon>
        <taxon>Rickettsiales</taxon>
        <taxon>Rickettsiaceae</taxon>
        <taxon>Rickettsieae</taxon>
        <taxon>Rickettsia</taxon>
        <taxon>belli group</taxon>
    </lineage>
</organism>